<dbReference type="EMBL" id="GL988040">
    <property type="protein sequence ID" value="EGS22136.1"/>
    <property type="molecule type" value="Genomic_DNA"/>
</dbReference>
<dbReference type="RefSeq" id="XP_006692155.1">
    <property type="nucleotide sequence ID" value="XM_006692092.1"/>
</dbReference>
<dbReference type="PDB" id="6CFZ">
    <property type="method" value="EM"/>
    <property type="resolution" value="4.50 A"/>
    <property type="chains" value="J=1-239"/>
</dbReference>
<dbReference type="PDBsum" id="6CFZ"/>
<dbReference type="EMDB" id="EMD-7469"/>
<dbReference type="SMR" id="G0S2A3"/>
<dbReference type="IntAct" id="G0S2A3">
    <property type="interactions" value="1"/>
</dbReference>
<dbReference type="STRING" id="759272.G0S2A3"/>
<dbReference type="GeneID" id="18255690"/>
<dbReference type="KEGG" id="cthr:CTHT_0016520"/>
<dbReference type="eggNOG" id="ENOG502SCS2">
    <property type="taxonomic scope" value="Eukaryota"/>
</dbReference>
<dbReference type="HOGENOM" id="CLU_064328_0_0_1"/>
<dbReference type="OMA" id="TRRGTMF"/>
<dbReference type="OrthoDB" id="10016597at2759"/>
<dbReference type="Proteomes" id="UP000008066">
    <property type="component" value="Unassembled WGS sequence"/>
</dbReference>
<dbReference type="GO" id="GO:0005737">
    <property type="term" value="C:cytoplasm"/>
    <property type="evidence" value="ECO:0007669"/>
    <property type="project" value="UniProtKB-KW"/>
</dbReference>
<dbReference type="GO" id="GO:0042729">
    <property type="term" value="C:DASH complex"/>
    <property type="evidence" value="ECO:0000314"/>
    <property type="project" value="UniProtKB"/>
</dbReference>
<dbReference type="GO" id="GO:0000776">
    <property type="term" value="C:kinetochore"/>
    <property type="evidence" value="ECO:0000305"/>
    <property type="project" value="UniProtKB"/>
</dbReference>
<dbReference type="GO" id="GO:0072686">
    <property type="term" value="C:mitotic spindle"/>
    <property type="evidence" value="ECO:0000305"/>
    <property type="project" value="UniProtKB"/>
</dbReference>
<dbReference type="GO" id="GO:0005876">
    <property type="term" value="C:spindle microtubule"/>
    <property type="evidence" value="ECO:0007669"/>
    <property type="project" value="InterPro"/>
</dbReference>
<dbReference type="GO" id="GO:0051315">
    <property type="term" value="P:attachment of mitotic spindle microtubules to kinetochore"/>
    <property type="evidence" value="ECO:0000305"/>
    <property type="project" value="UniProtKB"/>
</dbReference>
<dbReference type="GO" id="GO:0008608">
    <property type="term" value="P:attachment of spindle microtubules to kinetochore"/>
    <property type="evidence" value="ECO:0000250"/>
    <property type="project" value="UniProtKB"/>
</dbReference>
<dbReference type="GO" id="GO:0051301">
    <property type="term" value="P:cell division"/>
    <property type="evidence" value="ECO:0007669"/>
    <property type="project" value="UniProtKB-KW"/>
</dbReference>
<dbReference type="GO" id="GO:1990758">
    <property type="term" value="P:mitotic sister chromatid biorientation"/>
    <property type="evidence" value="ECO:0000250"/>
    <property type="project" value="UniProtKB"/>
</dbReference>
<dbReference type="GO" id="GO:1990976">
    <property type="term" value="P:protein transport along microtubule to mitotic spindle pole body"/>
    <property type="evidence" value="ECO:0000250"/>
    <property type="project" value="UniProtKB"/>
</dbReference>
<dbReference type="InterPro" id="IPR013966">
    <property type="entry name" value="Spc34"/>
</dbReference>
<dbReference type="Pfam" id="PF08657">
    <property type="entry name" value="DASH_Spc34"/>
    <property type="match status" value="2"/>
</dbReference>
<name>SPC34_CHATD</name>
<reference evidence="9" key="1">
    <citation type="journal article" date="2011" name="Cell">
        <title>Insight into structure and assembly of the nuclear pore complex by utilizing the genome of a eukaryotic thermophile.</title>
        <authorList>
            <person name="Amlacher S."/>
            <person name="Sarges P."/>
            <person name="Flemming D."/>
            <person name="van Noort V."/>
            <person name="Kunze R."/>
            <person name="Devos D.P."/>
            <person name="Arumugam M."/>
            <person name="Bork P."/>
            <person name="Hurt E."/>
        </authorList>
    </citation>
    <scope>NUCLEOTIDE SEQUENCE [LARGE SCALE GENOMIC DNA]</scope>
    <source>
        <strain evidence="9">DSM 1495 / CBS 144.50 / IMI 039719</strain>
    </source>
</reference>
<reference evidence="10" key="2">
    <citation type="journal article" date="2018" name="Science">
        <title>Structure of the DASH/Dam1 complex shows its role at the yeast kinetochore-microtubule interface.</title>
        <authorList>
            <person name="Jenni S."/>
            <person name="Harrison S.C."/>
        </authorList>
    </citation>
    <scope>STRUCTURE BY ELECTRON MICROSCOPY (4.50 ANGSTROMS) OF 1-239</scope>
    <scope>IDENTIFICATION IN THE DASH COMPLEX</scope>
</reference>
<feature type="chain" id="PRO_0000459465" description="DASH complex subunit SPC34">
    <location>
        <begin position="1"/>
        <end position="255"/>
    </location>
</feature>
<feature type="region of interest" description="Disordered" evidence="4">
    <location>
        <begin position="53"/>
        <end position="81"/>
    </location>
</feature>
<feature type="coiled-coil region" evidence="3">
    <location>
        <begin position="176"/>
        <end position="248"/>
    </location>
</feature>
<feature type="compositionally biased region" description="Polar residues" evidence="4">
    <location>
        <begin position="63"/>
        <end position="81"/>
    </location>
</feature>
<gene>
    <name evidence="6" type="primary">SPC34</name>
    <name evidence="8" type="ORF">CTHT_0016520</name>
</gene>
<keyword id="KW-0002">3D-structure</keyword>
<keyword id="KW-0131">Cell cycle</keyword>
<keyword id="KW-0132">Cell division</keyword>
<keyword id="KW-0137">Centromere</keyword>
<keyword id="KW-0158">Chromosome</keyword>
<keyword id="KW-0159">Chromosome partition</keyword>
<keyword id="KW-0175">Coiled coil</keyword>
<keyword id="KW-0963">Cytoplasm</keyword>
<keyword id="KW-0206">Cytoskeleton</keyword>
<keyword id="KW-0995">Kinetochore</keyword>
<keyword id="KW-0493">Microtubule</keyword>
<keyword id="KW-0498">Mitosis</keyword>
<keyword id="KW-0539">Nucleus</keyword>
<keyword id="KW-1185">Reference proteome</keyword>
<proteinExistence type="evidence at protein level"/>
<protein>
    <recommendedName>
        <fullName evidence="6">DASH complex subunit SPC34</fullName>
    </recommendedName>
    <alternativeName>
        <fullName evidence="2">Outer kinetochore protein SPC34</fullName>
    </alternativeName>
</protein>
<sequence>MSLLSAHLEQISISCQGIDSLPFPPPKIFTNALLSNPDITSLIRDTEAHERALFSVPPPPPRQTTLTAEQQQQQKPSNRRQTVFNVTGGEIRTGGVGSASTARRNTAVAAVLGGDLHAQIMRGTRARPGQQPGSGDIDMEVLLRGVEKLCAVYPLPGALERVPVIRQKWQAQSNTLAYYEAKIAEQQEMLDRIAQERMMNDGDGDVEMEDVEEVGMTEEDLRREEEEVRELDKRKRDLQARLRALDADLGGLLNV</sequence>
<comment type="function">
    <text evidence="2">Component of the DASH complex that connects microtubules with kinetochores and couples microtubule depolymerisation to chromosome movement; it is involved in retrieving kinetochores to the spindle poles before their re-orientation on the spindle in early mitosis and allows microtubule depolymerization to pull chromosomes apart and resist detachment during anaphase. Kinetochores, consisting of a centromere-associated inner segment and a microtubule-contacting outer segment, play a crucial role in chromosome segregation by mediating the physical connection between centromeric DNA and microtubules. Kinetochores also serve as an input point for the spindle assembly checkpoint, which delays anaphase until all chromosomes have bioriented on the mitotic spindle.</text>
</comment>
<comment type="subunit">
    <text evidence="1 2 5">Component of the DASH complex consisting of ASK1, DAD1, DAD2, DAD3, DAD4, DAM1, DUO1, HSK3, SPC19 and SPC34, with a stoichiometry of one copy of each subunit per complex (PubMed:29724956). Multiple DASH complexes oligomerize to form a ring that encircles spindle microtubules and organizes the rod-like NDC80 complexes of the outer kinetochore of the outer kinetochore (PubMed:29724956). DASH complex oligomerization strengthens microtubule attachments (By similarity). On cytoplasmic microtubules, DASH complexes appear to form patches instead of rings (By similarity).</text>
</comment>
<comment type="subcellular location">
    <subcellularLocation>
        <location evidence="2">Nucleus</location>
    </subcellularLocation>
    <subcellularLocation>
        <location evidence="2">Cytoplasm</location>
        <location evidence="2">Cytoskeleton</location>
        <location evidence="2">Spindle</location>
    </subcellularLocation>
    <subcellularLocation>
        <location evidence="2">Chromosome</location>
        <location evidence="2">Centromere</location>
        <location evidence="2">Kinetochore</location>
    </subcellularLocation>
</comment>
<comment type="similarity">
    <text evidence="7">Belongs to the DASH complex SPC34 family.</text>
</comment>
<evidence type="ECO:0000250" key="1">
    <source>
        <dbReference type="UniProtKB" id="O14285"/>
    </source>
</evidence>
<evidence type="ECO:0000250" key="2">
    <source>
        <dbReference type="UniProtKB" id="P36131"/>
    </source>
</evidence>
<evidence type="ECO:0000255" key="3"/>
<evidence type="ECO:0000256" key="4">
    <source>
        <dbReference type="SAM" id="MobiDB-lite"/>
    </source>
</evidence>
<evidence type="ECO:0000269" key="5">
    <source>
    </source>
</evidence>
<evidence type="ECO:0000303" key="6">
    <source>
    </source>
</evidence>
<evidence type="ECO:0000305" key="7"/>
<evidence type="ECO:0000312" key="8">
    <source>
        <dbReference type="EMBL" id="EGS22136.1"/>
    </source>
</evidence>
<evidence type="ECO:0000312" key="9">
    <source>
        <dbReference type="Proteomes" id="UP000008066"/>
    </source>
</evidence>
<evidence type="ECO:0007744" key="10">
    <source>
        <dbReference type="PDB" id="6CFZ"/>
    </source>
</evidence>
<accession>G0S2A3</accession>
<organism evidence="9">
    <name type="scientific">Chaetomium thermophilum (strain DSM 1495 / CBS 144.50 / IMI 039719)</name>
    <name type="common">Thermochaetoides thermophila</name>
    <dbReference type="NCBI Taxonomy" id="759272"/>
    <lineage>
        <taxon>Eukaryota</taxon>
        <taxon>Fungi</taxon>
        <taxon>Dikarya</taxon>
        <taxon>Ascomycota</taxon>
        <taxon>Pezizomycotina</taxon>
        <taxon>Sordariomycetes</taxon>
        <taxon>Sordariomycetidae</taxon>
        <taxon>Sordariales</taxon>
        <taxon>Chaetomiaceae</taxon>
        <taxon>Thermochaetoides</taxon>
    </lineage>
</organism>